<reference key="1">
    <citation type="journal article" date="1998" name="Science">
        <title>Genome sequence of the nematode C. elegans: a platform for investigating biology.</title>
        <authorList>
            <consortium name="The C. elegans sequencing consortium"/>
        </authorList>
    </citation>
    <scope>NUCLEOTIDE SEQUENCE [LARGE SCALE GENOMIC DNA]</scope>
    <source>
        <strain>Bristol N2</strain>
    </source>
</reference>
<reference key="2">
    <citation type="journal article" date="2004" name="Proc. Natl. Acad. Sci. U.S.A.">
        <title>The Caenorhabditis elegans IMPAS gene, imp-2, is essential for development and is functionally distinct from related presenilins.</title>
        <authorList>
            <person name="Grigorenko A.P."/>
            <person name="Moliaka Y.K."/>
            <person name="Soto M.C."/>
            <person name="Mello C.C."/>
            <person name="Rogaev E.I."/>
        </authorList>
    </citation>
    <scope>FUNCTION</scope>
    <scope>DISRUPTION PHENOTYPE</scope>
</reference>
<reference key="3">
    <citation type="journal article" date="2005" name="Glycobiology">
        <title>Identification of the hydrophobic glycoproteins of Caenorhabditis elegans.</title>
        <authorList>
            <person name="Fan X."/>
            <person name="She Y.-M."/>
            <person name="Bagshaw R.D."/>
            <person name="Callahan J.W."/>
            <person name="Schachter H."/>
            <person name="Mahuran D.J."/>
        </authorList>
    </citation>
    <scope>GLYCOSYLATION [LARGE SCALE ANALYSIS] AT ASN-114</scope>
    <scope>IDENTIFICATION BY MASS SPECTROMETRY</scope>
</reference>
<reference key="4">
    <citation type="journal article" date="2007" name="Mol. Cell. Proteomics">
        <title>Proteomics reveals N-linked glycoprotein diversity in Caenorhabditis elegans and suggests an atypical translocation mechanism for integral membrane proteins.</title>
        <authorList>
            <person name="Kaji H."/>
            <person name="Kamiie J."/>
            <person name="Kawakami H."/>
            <person name="Kido K."/>
            <person name="Yamauchi Y."/>
            <person name="Shinkawa T."/>
            <person name="Taoka M."/>
            <person name="Takahashi N."/>
            <person name="Isobe T."/>
        </authorList>
    </citation>
    <scope>GLYCOSYLATION [LARGE SCALE ANALYSIS] AT ASN-114 AND ASN-123</scope>
    <scope>IDENTIFICATION BY MASS SPECTROMETRY</scope>
    <source>
        <strain>Bristol N2</strain>
    </source>
</reference>
<reference key="5">
    <citation type="journal article" date="2017" name="Oncotarget">
        <title>Mutational re-modeling of di-aspartyl intramembrane proteases: uncoupling physiologically-relevant activities from those associated with Alzheimer's disease.</title>
        <authorList>
            <person name="Grigorenko A.P."/>
            <person name="Moliaka Y.K."/>
            <person name="Plotnikova O.V."/>
            <person name="Smirnov A."/>
            <person name="Nikishina V.A."/>
            <person name="Goltsov A.Y."/>
            <person name="Gusev F."/>
            <person name="Andreeva T.V."/>
            <person name="Nelson O."/>
            <person name="Bezprozvanny I."/>
            <person name="Rogaev E.I."/>
        </authorList>
    </citation>
    <scope>FUNCTION</scope>
    <scope>CATALYTIC ACTIVITY</scope>
    <scope>DISRUPTION PHENOTYPE</scope>
    <scope>MUTAGENESIS OF GLY-350 AND PRO-417</scope>
</reference>
<name>IMP2_CAEEL</name>
<comment type="function">
    <text evidence="3 6 8">Acts as intramembrane protease (Probable). In larvae, required for the complete shedding of the cuticle during molting, possibly by regulating cholesterol uptake via lrp-1 (PubMed:15469912). Involved in embryonic and larval development (PubMed:15469912, PubMed:29137240).</text>
</comment>
<comment type="subcellular location">
    <subcellularLocation>
        <location evidence="2">Membrane</location>
        <topology evidence="2">Multi-pass membrane protein</topology>
    </subcellularLocation>
    <subcellularLocation>
        <location evidence="7">Endoplasmic reticulum membrane</location>
        <topology evidence="7">Multi-pass membrane protein</topology>
    </subcellularLocation>
</comment>
<comment type="domain">
    <text evidence="1">The PAL motif is required for normal active site conformation.</text>
</comment>
<comment type="disruption phenotype">
    <text evidence="3 6">RNAi-mediated knockdown results in late stage embryonic and larval lethality, slow growth and pharyngeal pumping, uncoordinated movement, reduced brood size, middle body constriction, and muscle detachment (PubMed:15469912, PubMed:29137240). RNAi-mediated knockdown in L1 larvae causes incomplete cuticle shedding during molting (PubMed:15469912).</text>
</comment>
<comment type="similarity">
    <text evidence="7">Belongs to the peptidase A22B family.</text>
</comment>
<dbReference type="EC" id="3.4.23.-" evidence="8"/>
<dbReference type="EMBL" id="BX284604">
    <property type="protein sequence ID" value="CAA92975.1"/>
    <property type="molecule type" value="Genomic_DNA"/>
</dbReference>
<dbReference type="PIR" id="T24523">
    <property type="entry name" value="T24523"/>
</dbReference>
<dbReference type="RefSeq" id="NP_502079.1">
    <property type="nucleotide sequence ID" value="NM_069678.9"/>
</dbReference>
<dbReference type="BioGRID" id="43112">
    <property type="interactions" value="18"/>
</dbReference>
<dbReference type="FunCoup" id="P49049">
    <property type="interactions" value="3020"/>
</dbReference>
<dbReference type="STRING" id="6239.T05E11.5.1"/>
<dbReference type="MEROPS" id="A22.003"/>
<dbReference type="GlyCosmos" id="P49049">
    <property type="glycosylation" value="3 sites, No reported glycans"/>
</dbReference>
<dbReference type="iPTMnet" id="P49049"/>
<dbReference type="PaxDb" id="6239-T05E11.5"/>
<dbReference type="PeptideAtlas" id="P49049"/>
<dbReference type="EnsemblMetazoa" id="T05E11.5.1">
    <property type="protein sequence ID" value="T05E11.5.1"/>
    <property type="gene ID" value="WBGene00011481"/>
</dbReference>
<dbReference type="GeneID" id="178013"/>
<dbReference type="KEGG" id="cel:CELE_T05E11.5"/>
<dbReference type="UCSC" id="T05E11.5">
    <property type="organism name" value="c. elegans"/>
</dbReference>
<dbReference type="AGR" id="WB:WBGene00011481"/>
<dbReference type="CTD" id="178013"/>
<dbReference type="WormBase" id="T05E11.5">
    <property type="protein sequence ID" value="CE06364"/>
    <property type="gene ID" value="WBGene00011481"/>
    <property type="gene designation" value="imp-2"/>
</dbReference>
<dbReference type="eggNOG" id="KOG2443">
    <property type="taxonomic scope" value="Eukaryota"/>
</dbReference>
<dbReference type="GeneTree" id="ENSGT00940000156478"/>
<dbReference type="HOGENOM" id="CLU_023799_0_2_1"/>
<dbReference type="InParanoid" id="P49049"/>
<dbReference type="OMA" id="RHWITNN"/>
<dbReference type="OrthoDB" id="29661at2759"/>
<dbReference type="PhylomeDB" id="P49049"/>
<dbReference type="PRO" id="PR:P49049"/>
<dbReference type="Proteomes" id="UP000001940">
    <property type="component" value="Chromosome IV"/>
</dbReference>
<dbReference type="Bgee" id="WBGene00011481">
    <property type="expression patterns" value="Expressed in germ line (C elegans) and 4 other cell types or tissues"/>
</dbReference>
<dbReference type="GO" id="GO:0098554">
    <property type="term" value="C:cytoplasmic side of endoplasmic reticulum membrane"/>
    <property type="evidence" value="ECO:0000318"/>
    <property type="project" value="GO_Central"/>
</dbReference>
<dbReference type="GO" id="GO:0098553">
    <property type="term" value="C:lumenal side of endoplasmic reticulum membrane"/>
    <property type="evidence" value="ECO:0000318"/>
    <property type="project" value="GO_Central"/>
</dbReference>
<dbReference type="GO" id="GO:0042500">
    <property type="term" value="F:aspartic endopeptidase activity, intramembrane cleaving"/>
    <property type="evidence" value="ECO:0000314"/>
    <property type="project" value="UniProtKB"/>
</dbReference>
<dbReference type="GO" id="GO:0042395">
    <property type="term" value="P:ecdysis, collagen and cuticulin-based cuticle"/>
    <property type="evidence" value="ECO:0000315"/>
    <property type="project" value="UniProtKB"/>
</dbReference>
<dbReference type="GO" id="GO:0036498">
    <property type="term" value="P:IRE1-mediated unfolded protein response"/>
    <property type="evidence" value="ECO:0007007"/>
    <property type="project" value="WormBase"/>
</dbReference>
<dbReference type="GO" id="GO:0033619">
    <property type="term" value="P:membrane protein proteolysis"/>
    <property type="evidence" value="ECO:0000318"/>
    <property type="project" value="GO_Central"/>
</dbReference>
<dbReference type="GO" id="GO:0040019">
    <property type="term" value="P:positive regulation of embryonic development"/>
    <property type="evidence" value="ECO:0000315"/>
    <property type="project" value="UniProtKB"/>
</dbReference>
<dbReference type="GO" id="GO:0006508">
    <property type="term" value="P:proteolysis"/>
    <property type="evidence" value="ECO:0000314"/>
    <property type="project" value="UniProtKB"/>
</dbReference>
<dbReference type="GO" id="GO:0061062">
    <property type="term" value="P:regulation of nematode larval development"/>
    <property type="evidence" value="ECO:0000315"/>
    <property type="project" value="UniProtKB"/>
</dbReference>
<dbReference type="GO" id="GO:0006465">
    <property type="term" value="P:signal peptide processing"/>
    <property type="evidence" value="ECO:0000318"/>
    <property type="project" value="GO_Central"/>
</dbReference>
<dbReference type="InterPro" id="IPR007369">
    <property type="entry name" value="Peptidase_A22B_SPP"/>
</dbReference>
<dbReference type="InterPro" id="IPR006639">
    <property type="entry name" value="Preselin/SPP"/>
</dbReference>
<dbReference type="PANTHER" id="PTHR12174:SF23">
    <property type="entry name" value="MINOR HISTOCOMPATIBILITY ANTIGEN H13"/>
    <property type="match status" value="1"/>
</dbReference>
<dbReference type="PANTHER" id="PTHR12174">
    <property type="entry name" value="SIGNAL PEPTIDE PEPTIDASE"/>
    <property type="match status" value="1"/>
</dbReference>
<dbReference type="Pfam" id="PF04258">
    <property type="entry name" value="Peptidase_A22B"/>
    <property type="match status" value="1"/>
</dbReference>
<dbReference type="SMART" id="SM00730">
    <property type="entry name" value="PSN"/>
    <property type="match status" value="1"/>
</dbReference>
<evidence type="ECO:0000250" key="1">
    <source>
        <dbReference type="UniProtKB" id="P49768"/>
    </source>
</evidence>
<evidence type="ECO:0000255" key="2"/>
<evidence type="ECO:0000269" key="3">
    <source>
    </source>
</evidence>
<evidence type="ECO:0000269" key="4">
    <source>
    </source>
</evidence>
<evidence type="ECO:0000269" key="5">
    <source>
    </source>
</evidence>
<evidence type="ECO:0000269" key="6">
    <source>
    </source>
</evidence>
<evidence type="ECO:0000305" key="7"/>
<evidence type="ECO:0000305" key="8">
    <source>
    </source>
</evidence>
<evidence type="ECO:0000312" key="9">
    <source>
        <dbReference type="WormBase" id="T05E11.5"/>
    </source>
</evidence>
<keyword id="KW-0256">Endoplasmic reticulum</keyword>
<keyword id="KW-0325">Glycoprotein</keyword>
<keyword id="KW-0378">Hydrolase</keyword>
<keyword id="KW-0472">Membrane</keyword>
<keyword id="KW-0645">Protease</keyword>
<keyword id="KW-1185">Reference proteome</keyword>
<keyword id="KW-0812">Transmembrane</keyword>
<keyword id="KW-1133">Transmembrane helix</keyword>
<proteinExistence type="evidence at protein level"/>
<protein>
    <recommendedName>
        <fullName>Intramembrane protease 2</fullName>
        <ecNumber evidence="8">3.4.23.-</ecNumber>
    </recommendedName>
</protein>
<accession>P49049</accession>
<gene>
    <name evidence="9" type="primary">imp-2</name>
    <name evidence="9" type="ORF">T05E11.5</name>
</gene>
<feature type="chain" id="PRO_0000073914" description="Intramembrane protease 2">
    <location>
        <begin position="1"/>
        <end position="468"/>
    </location>
</feature>
<feature type="topological domain" description="Lumenal" evidence="2">
    <location>
        <begin position="1"/>
        <end position="22"/>
    </location>
</feature>
<feature type="transmembrane region" description="Helical" evidence="2">
    <location>
        <begin position="23"/>
        <end position="43"/>
    </location>
</feature>
<feature type="topological domain" description="Cytoplasmic" evidence="2">
    <location>
        <begin position="44"/>
        <end position="70"/>
    </location>
</feature>
<feature type="transmembrane region" description="Helical" evidence="2">
    <location>
        <begin position="71"/>
        <end position="91"/>
    </location>
</feature>
<feature type="topological domain" description="Lumenal" evidence="2">
    <location>
        <begin position="92"/>
        <end position="168"/>
    </location>
</feature>
<feature type="transmembrane region" description="Helical" evidence="2">
    <location>
        <begin position="169"/>
        <end position="189"/>
    </location>
</feature>
<feature type="topological domain" description="Cytoplasmic" evidence="2">
    <location>
        <begin position="190"/>
        <end position="247"/>
    </location>
</feature>
<feature type="transmembrane region" description="Helical" evidence="2">
    <location>
        <begin position="248"/>
        <end position="265"/>
    </location>
</feature>
<feature type="topological domain" description="Lumenal" evidence="2">
    <location>
        <begin position="266"/>
        <end position="267"/>
    </location>
</feature>
<feature type="transmembrane region" description="Helical" evidence="2">
    <location>
        <begin position="268"/>
        <end position="284"/>
    </location>
</feature>
<feature type="topological domain" description="Cytoplasmic" evidence="2">
    <location>
        <begin position="285"/>
        <end position="296"/>
    </location>
</feature>
<feature type="transmembrane region" description="Helical" evidence="2">
    <location>
        <begin position="297"/>
        <end position="317"/>
    </location>
</feature>
<feature type="topological domain" description="Lumenal" evidence="2">
    <location>
        <begin position="318"/>
        <end position="343"/>
    </location>
</feature>
<feature type="transmembrane region" description="Helical" evidence="2">
    <location>
        <begin position="344"/>
        <end position="364"/>
    </location>
</feature>
<feature type="topological domain" description="Cytoplasmic" evidence="2">
    <location>
        <begin position="365"/>
        <end position="388"/>
    </location>
</feature>
<feature type="transmembrane region" description="Helical" evidence="2">
    <location>
        <begin position="389"/>
        <end position="409"/>
    </location>
</feature>
<feature type="topological domain" description="Lumenal" evidence="2">
    <location>
        <begin position="410"/>
        <end position="415"/>
    </location>
</feature>
<feature type="transmembrane region" description="Helical" evidence="2">
    <location>
        <begin position="416"/>
        <end position="436"/>
    </location>
</feature>
<feature type="topological domain" description="Cytoplasmic" evidence="2">
    <location>
        <begin position="437"/>
        <end position="468"/>
    </location>
</feature>
<feature type="short sequence motif" description="PAL" evidence="1">
    <location>
        <begin position="417"/>
        <end position="419"/>
    </location>
</feature>
<feature type="active site" evidence="1">
    <location>
        <position position="306"/>
    </location>
</feature>
<feature type="active site" evidence="1">
    <location>
        <position position="353"/>
    </location>
</feature>
<feature type="glycosylation site" description="N-linked (GlcNAc...) asparagine" evidence="2">
    <location>
        <position position="14"/>
    </location>
</feature>
<feature type="glycosylation site" description="N-linked (GlcNAc...) asparagine" evidence="4 5">
    <location>
        <position position="114"/>
    </location>
</feature>
<feature type="glycosylation site" description="N-linked (GlcNAc...) asparagine" evidence="5">
    <location>
        <position position="123"/>
    </location>
</feature>
<feature type="mutagenesis site" description="Slight reduction in progeny number." evidence="6">
    <original>G</original>
    <variation>A</variation>
    <location>
        <position position="350"/>
    </location>
</feature>
<feature type="mutagenesis site" description="Embryonic or larval lethality. The few surviving adults are uncoordinated and have severely reduced fertility." evidence="6">
    <original>G</original>
    <variation>K</variation>
    <location>
        <position position="350"/>
    </location>
</feature>
<feature type="mutagenesis site" description="Slight reduction in progeny number." evidence="6">
    <original>P</original>
    <variation>A</variation>
    <location>
        <position position="417"/>
    </location>
</feature>
<feature type="mutagenesis site" description="Embryonic or larval lethality. The few surviving adults are uncoordinated and have severely reduced fertility." evidence="6">
    <original>P</original>
    <variation>L</variation>
    <location>
        <position position="417"/>
    </location>
</feature>
<sequence length="468" mass="52794">MAEAATEIPPTASNVTVFTFEEQATSSLALYGMSILCIIIGSIRSAQYIRTNIDKKRLIEGSITMREARKFPISASLVLFGLYLFFKPAAERFLWVARVFQILRVPEEYVQKINSTIISYTANTTTTGPSEPFLLRLASRIPQERVPEAIQNAATYAYTNLPTIQKAECMQLLTFLICFEGVNAFASLLKPFVTAFLKKMPLVPSFLRFNAPYLFSLKKGNKEMEEGDIEDAKKKETEYLFKIDFDRYDIIALLMCSPILISHLLKRHWITNNIIGVSFSILGIERLHLASFKAGSLLLVGLFFYDIFWVFGTDVMTSVAKGIDAPILLQFPQDIYRNGIMEASKHSMLGLGDIVIPGIFIALLRRFDYRVVQTTAESKAPQGSLKGRYYFVVTVVAYMAGLFITMAVMHHFKAAQPALLYLVPCCLFVPLLLAVIRGELSALWNYDESRHVDNEENRKKVDSGKKNN</sequence>
<organism>
    <name type="scientific">Caenorhabditis elegans</name>
    <dbReference type="NCBI Taxonomy" id="6239"/>
    <lineage>
        <taxon>Eukaryota</taxon>
        <taxon>Metazoa</taxon>
        <taxon>Ecdysozoa</taxon>
        <taxon>Nematoda</taxon>
        <taxon>Chromadorea</taxon>
        <taxon>Rhabditida</taxon>
        <taxon>Rhabditina</taxon>
        <taxon>Rhabditomorpha</taxon>
        <taxon>Rhabditoidea</taxon>
        <taxon>Rhabditidae</taxon>
        <taxon>Peloderinae</taxon>
        <taxon>Caenorhabditis</taxon>
    </lineage>
</organism>